<comment type="function">
    <text evidence="1">Required for insertion of 4Fe-4S clusters for at least IspG.</text>
</comment>
<comment type="cofactor">
    <cofactor evidence="1">
        <name>iron-sulfur cluster</name>
        <dbReference type="ChEBI" id="CHEBI:30408"/>
    </cofactor>
    <text evidence="1">Binds 1 iron-sulfur cluster per subunit.</text>
</comment>
<comment type="subunit">
    <text evidence="1">Homodimer.</text>
</comment>
<comment type="similarity">
    <text evidence="1">Belongs to the HesB/IscA family.</text>
</comment>
<sequence>MSDDVALPLQFTDAAANKVKSLIADEDNPNLKLRVYITGGGCSGFQYGFTFDDQVNEGDMTIEKQGVGLVVDPMSLQYLVGGSVDYTEGLEGSRFIVTNPNAKSTCGCGSSFSI</sequence>
<accession>B5FJ03</accession>
<proteinExistence type="inferred from homology"/>
<organism>
    <name type="scientific">Salmonella dublin (strain CT_02021853)</name>
    <dbReference type="NCBI Taxonomy" id="439851"/>
    <lineage>
        <taxon>Bacteria</taxon>
        <taxon>Pseudomonadati</taxon>
        <taxon>Pseudomonadota</taxon>
        <taxon>Gammaproteobacteria</taxon>
        <taxon>Enterobacterales</taxon>
        <taxon>Enterobacteriaceae</taxon>
        <taxon>Salmonella</taxon>
    </lineage>
</organism>
<feature type="chain" id="PRO_1000144929" description="Iron-sulfur cluster insertion protein ErpA">
    <location>
        <begin position="1"/>
        <end position="114"/>
    </location>
</feature>
<feature type="binding site" evidence="1">
    <location>
        <position position="42"/>
    </location>
    <ligand>
        <name>iron-sulfur cluster</name>
        <dbReference type="ChEBI" id="CHEBI:30408"/>
    </ligand>
</feature>
<feature type="binding site" evidence="1">
    <location>
        <position position="106"/>
    </location>
    <ligand>
        <name>iron-sulfur cluster</name>
        <dbReference type="ChEBI" id="CHEBI:30408"/>
    </ligand>
</feature>
<feature type="binding site" evidence="1">
    <location>
        <position position="108"/>
    </location>
    <ligand>
        <name>iron-sulfur cluster</name>
        <dbReference type="ChEBI" id="CHEBI:30408"/>
    </ligand>
</feature>
<protein>
    <recommendedName>
        <fullName evidence="1">Iron-sulfur cluster insertion protein ErpA</fullName>
    </recommendedName>
</protein>
<reference key="1">
    <citation type="journal article" date="2011" name="J. Bacteriol.">
        <title>Comparative genomics of 28 Salmonella enterica isolates: evidence for CRISPR-mediated adaptive sublineage evolution.</title>
        <authorList>
            <person name="Fricke W.F."/>
            <person name="Mammel M.K."/>
            <person name="McDermott P.F."/>
            <person name="Tartera C."/>
            <person name="White D.G."/>
            <person name="Leclerc J.E."/>
            <person name="Ravel J."/>
            <person name="Cebula T.A."/>
        </authorList>
    </citation>
    <scope>NUCLEOTIDE SEQUENCE [LARGE SCALE GENOMIC DNA]</scope>
    <source>
        <strain>CT_02021853</strain>
    </source>
</reference>
<name>ERPA_SALDC</name>
<gene>
    <name evidence="1" type="primary">erpA</name>
    <name type="ordered locus">SeD_A0224</name>
</gene>
<dbReference type="EMBL" id="CP001144">
    <property type="protein sequence ID" value="ACH74823.1"/>
    <property type="molecule type" value="Genomic_DNA"/>
</dbReference>
<dbReference type="RefSeq" id="WP_001278668.1">
    <property type="nucleotide sequence ID" value="NC_011205.1"/>
</dbReference>
<dbReference type="SMR" id="B5FJ03"/>
<dbReference type="GeneID" id="66754727"/>
<dbReference type="KEGG" id="sed:SeD_A0224"/>
<dbReference type="HOGENOM" id="CLU_069054_5_3_6"/>
<dbReference type="Proteomes" id="UP000008322">
    <property type="component" value="Chromosome"/>
</dbReference>
<dbReference type="GO" id="GO:0005829">
    <property type="term" value="C:cytosol"/>
    <property type="evidence" value="ECO:0007669"/>
    <property type="project" value="TreeGrafter"/>
</dbReference>
<dbReference type="GO" id="GO:0051537">
    <property type="term" value="F:2 iron, 2 sulfur cluster binding"/>
    <property type="evidence" value="ECO:0007669"/>
    <property type="project" value="UniProtKB-ARBA"/>
</dbReference>
<dbReference type="GO" id="GO:0051539">
    <property type="term" value="F:4 iron, 4 sulfur cluster binding"/>
    <property type="evidence" value="ECO:0007669"/>
    <property type="project" value="TreeGrafter"/>
</dbReference>
<dbReference type="GO" id="GO:0005506">
    <property type="term" value="F:iron ion binding"/>
    <property type="evidence" value="ECO:0007669"/>
    <property type="project" value="UniProtKB-UniRule"/>
</dbReference>
<dbReference type="GO" id="GO:0016226">
    <property type="term" value="P:iron-sulfur cluster assembly"/>
    <property type="evidence" value="ECO:0007669"/>
    <property type="project" value="UniProtKB-UniRule"/>
</dbReference>
<dbReference type="FunFam" id="2.60.300.12:FF:000002">
    <property type="entry name" value="Iron-sulfur cluster insertion protein ErpA"/>
    <property type="match status" value="1"/>
</dbReference>
<dbReference type="Gene3D" id="2.60.300.12">
    <property type="entry name" value="HesB-like domain"/>
    <property type="match status" value="1"/>
</dbReference>
<dbReference type="HAMAP" id="MF_01380">
    <property type="entry name" value="Fe_S_insert_ErpA"/>
    <property type="match status" value="1"/>
</dbReference>
<dbReference type="InterPro" id="IPR000361">
    <property type="entry name" value="FeS_biogenesis"/>
</dbReference>
<dbReference type="InterPro" id="IPR016092">
    <property type="entry name" value="FeS_cluster_insertion"/>
</dbReference>
<dbReference type="InterPro" id="IPR017870">
    <property type="entry name" value="FeS_cluster_insertion_CS"/>
</dbReference>
<dbReference type="InterPro" id="IPR023063">
    <property type="entry name" value="FeS_cluster_insertion_RrpA"/>
</dbReference>
<dbReference type="InterPro" id="IPR035903">
    <property type="entry name" value="HesB-like_dom_sf"/>
</dbReference>
<dbReference type="NCBIfam" id="TIGR00049">
    <property type="entry name" value="iron-sulfur cluster assembly accessory protein"/>
    <property type="match status" value="1"/>
</dbReference>
<dbReference type="NCBIfam" id="NF010147">
    <property type="entry name" value="PRK13623.1"/>
    <property type="match status" value="1"/>
</dbReference>
<dbReference type="PANTHER" id="PTHR43011">
    <property type="entry name" value="IRON-SULFUR CLUSTER ASSEMBLY 2 HOMOLOG, MITOCHONDRIAL"/>
    <property type="match status" value="1"/>
</dbReference>
<dbReference type="PANTHER" id="PTHR43011:SF1">
    <property type="entry name" value="IRON-SULFUR CLUSTER ASSEMBLY 2 HOMOLOG, MITOCHONDRIAL"/>
    <property type="match status" value="1"/>
</dbReference>
<dbReference type="Pfam" id="PF01521">
    <property type="entry name" value="Fe-S_biosyn"/>
    <property type="match status" value="1"/>
</dbReference>
<dbReference type="SUPFAM" id="SSF89360">
    <property type="entry name" value="HesB-like domain"/>
    <property type="match status" value="1"/>
</dbReference>
<dbReference type="PROSITE" id="PS01152">
    <property type="entry name" value="HESB"/>
    <property type="match status" value="1"/>
</dbReference>
<evidence type="ECO:0000255" key="1">
    <source>
        <dbReference type="HAMAP-Rule" id="MF_01380"/>
    </source>
</evidence>
<keyword id="KW-0408">Iron</keyword>
<keyword id="KW-0411">Iron-sulfur</keyword>
<keyword id="KW-0479">Metal-binding</keyword>